<comment type="function">
    <text evidence="2 6 8 9">Mitochondrial glycine transporter that imports glycine into the mitochondrial matrix. Plays an important role in providing glycine for the first enzymatic step in heme biosynthesis, the condensation of glycine with succinyl-CoA to produce 5-aminolevulinate (ALA) in the mitochondrial matrix.</text>
</comment>
<comment type="catalytic activity">
    <reaction evidence="1">
        <text>glycine(in) = glycine(out)</text>
        <dbReference type="Rhea" id="RHEA:70715"/>
        <dbReference type="ChEBI" id="CHEBI:57305"/>
    </reaction>
</comment>
<comment type="biophysicochemical properties">
    <kinetics>
        <KM evidence="9">0.75 mM for glycine</KM>
        <Vmax evidence="9">169.8 nmol/min/mg enzyme for glycine uptake</Vmax>
    </kinetics>
</comment>
<comment type="subcellular location">
    <subcellularLocation>
        <location evidence="3 5 9">Mitochondrion</location>
    </subcellularLocation>
    <subcellularLocation>
        <location evidence="2 12 13">Mitochondrion inner membrane</location>
        <topology evidence="2 12">Multi-pass membrane protein</topology>
    </subcellularLocation>
</comment>
<comment type="disruption phenotype">
    <text evidence="6 7">Yeasts grow well on the fermentable carbon source dextrose, but only poorly aerobically on glycerol, indicating a defect in respiration. Furthermore, the deletion strain is unable to reduce sodium nitroprusside, indicating that the defect is likely in heme biosynthesis. Nitroprusside reduction can be rescued by supplementation of the medium with either glycine or 5-aminolevulinate (ALA) (PubMed:19412178). In combination with a disruption of MCX1, abrogates mitochondrial respiration (PubMed:25957689).</text>
</comment>
<comment type="miscellaneous">
    <text evidence="4">Present with 1550 molecules/cell in log phase SD medium.</text>
</comment>
<comment type="similarity">
    <text evidence="2">Belongs to the mitochondrial carrier (TC 2.A.29) family. SLC25A38 subfamily.</text>
</comment>
<reference key="1">
    <citation type="journal article" date="1997" name="Nature">
        <title>The nucleotide sequence of Saccharomyces cerevisiae chromosome IV.</title>
        <authorList>
            <person name="Jacq C."/>
            <person name="Alt-Moerbe J."/>
            <person name="Andre B."/>
            <person name="Arnold W."/>
            <person name="Bahr A."/>
            <person name="Ballesta J.P.G."/>
            <person name="Bargues M."/>
            <person name="Baron L."/>
            <person name="Becker A."/>
            <person name="Biteau N."/>
            <person name="Bloecker H."/>
            <person name="Blugeon C."/>
            <person name="Boskovic J."/>
            <person name="Brandt P."/>
            <person name="Brueckner M."/>
            <person name="Buitrago M.J."/>
            <person name="Coster F."/>
            <person name="Delaveau T."/>
            <person name="del Rey F."/>
            <person name="Dujon B."/>
            <person name="Eide L.G."/>
            <person name="Garcia-Cantalejo J.M."/>
            <person name="Goffeau A."/>
            <person name="Gomez-Peris A."/>
            <person name="Granotier C."/>
            <person name="Hanemann V."/>
            <person name="Hankeln T."/>
            <person name="Hoheisel J.D."/>
            <person name="Jaeger W."/>
            <person name="Jimenez A."/>
            <person name="Jonniaux J.-L."/>
            <person name="Kraemer C."/>
            <person name="Kuester H."/>
            <person name="Laamanen P."/>
            <person name="Legros Y."/>
            <person name="Louis E.J."/>
            <person name="Moeller-Rieker S."/>
            <person name="Monnet A."/>
            <person name="Moro M."/>
            <person name="Mueller-Auer S."/>
            <person name="Nussbaumer B."/>
            <person name="Paricio N."/>
            <person name="Paulin L."/>
            <person name="Perea J."/>
            <person name="Perez-Alonso M."/>
            <person name="Perez-Ortin J.E."/>
            <person name="Pohl T.M."/>
            <person name="Prydz H."/>
            <person name="Purnelle B."/>
            <person name="Rasmussen S.W."/>
            <person name="Remacha M.A."/>
            <person name="Revuelta J.L."/>
            <person name="Rieger M."/>
            <person name="Salom D."/>
            <person name="Saluz H.P."/>
            <person name="Saiz J.E."/>
            <person name="Saren A.-M."/>
            <person name="Schaefer M."/>
            <person name="Scharfe M."/>
            <person name="Schmidt E.R."/>
            <person name="Schneider C."/>
            <person name="Scholler P."/>
            <person name="Schwarz S."/>
            <person name="Soler-Mira A."/>
            <person name="Urrestarazu L.A."/>
            <person name="Verhasselt P."/>
            <person name="Vissers S."/>
            <person name="Voet M."/>
            <person name="Volckaert G."/>
            <person name="Wagner G."/>
            <person name="Wambutt R."/>
            <person name="Wedler E."/>
            <person name="Wedler H."/>
            <person name="Woelfl S."/>
            <person name="Harris D.E."/>
            <person name="Bowman S."/>
            <person name="Brown D."/>
            <person name="Churcher C.M."/>
            <person name="Connor R."/>
            <person name="Dedman K."/>
            <person name="Gentles S."/>
            <person name="Hamlin N."/>
            <person name="Hunt S."/>
            <person name="Jones L."/>
            <person name="McDonald S."/>
            <person name="Murphy L.D."/>
            <person name="Niblett D."/>
            <person name="Odell C."/>
            <person name="Oliver K."/>
            <person name="Rajandream M.A."/>
            <person name="Richards C."/>
            <person name="Shore L."/>
            <person name="Walsh S.V."/>
            <person name="Barrell B.G."/>
            <person name="Dietrich F.S."/>
            <person name="Mulligan J.T."/>
            <person name="Allen E."/>
            <person name="Araujo R."/>
            <person name="Aviles E."/>
            <person name="Berno A."/>
            <person name="Carpenter J."/>
            <person name="Chen E."/>
            <person name="Cherry J.M."/>
            <person name="Chung E."/>
            <person name="Duncan M."/>
            <person name="Hunicke-Smith S."/>
            <person name="Hyman R.W."/>
            <person name="Komp C."/>
            <person name="Lashkari D."/>
            <person name="Lew H."/>
            <person name="Lin D."/>
            <person name="Mosedale D."/>
            <person name="Nakahara K."/>
            <person name="Namath A."/>
            <person name="Oefner P."/>
            <person name="Oh C."/>
            <person name="Petel F.X."/>
            <person name="Roberts D."/>
            <person name="Schramm S."/>
            <person name="Schroeder M."/>
            <person name="Shogren T."/>
            <person name="Shroff N."/>
            <person name="Winant A."/>
            <person name="Yelton M.A."/>
            <person name="Botstein D."/>
            <person name="Davis R.W."/>
            <person name="Johnston M."/>
            <person name="Andrews S."/>
            <person name="Brinkman R."/>
            <person name="Cooper J."/>
            <person name="Ding H."/>
            <person name="Du Z."/>
            <person name="Favello A."/>
            <person name="Fulton L."/>
            <person name="Gattung S."/>
            <person name="Greco T."/>
            <person name="Hallsworth K."/>
            <person name="Hawkins J."/>
            <person name="Hillier L.W."/>
            <person name="Jier M."/>
            <person name="Johnson D."/>
            <person name="Johnston L."/>
            <person name="Kirsten J."/>
            <person name="Kucaba T."/>
            <person name="Langston Y."/>
            <person name="Latreille P."/>
            <person name="Le T."/>
            <person name="Mardis E."/>
            <person name="Menezes S."/>
            <person name="Miller N."/>
            <person name="Nhan M."/>
            <person name="Pauley A."/>
            <person name="Peluso D."/>
            <person name="Rifkin L."/>
            <person name="Riles L."/>
            <person name="Taich A."/>
            <person name="Trevaskis E."/>
            <person name="Vignati D."/>
            <person name="Wilcox L."/>
            <person name="Wohldman P."/>
            <person name="Vaudin M."/>
            <person name="Wilson R."/>
            <person name="Waterston R."/>
            <person name="Albermann K."/>
            <person name="Hani J."/>
            <person name="Heumann K."/>
            <person name="Kleine K."/>
            <person name="Mewes H.-W."/>
            <person name="Zollner A."/>
            <person name="Zaccaria P."/>
        </authorList>
    </citation>
    <scope>NUCLEOTIDE SEQUENCE [LARGE SCALE GENOMIC DNA]</scope>
    <source>
        <strain>ATCC 204508 / S288c</strain>
    </source>
</reference>
<reference key="2">
    <citation type="journal article" date="2014" name="G3 (Bethesda)">
        <title>The reference genome sequence of Saccharomyces cerevisiae: Then and now.</title>
        <authorList>
            <person name="Engel S.R."/>
            <person name="Dietrich F.S."/>
            <person name="Fisk D.G."/>
            <person name="Binkley G."/>
            <person name="Balakrishnan R."/>
            <person name="Costanzo M.C."/>
            <person name="Dwight S.S."/>
            <person name="Hitz B.C."/>
            <person name="Karra K."/>
            <person name="Nash R.S."/>
            <person name="Weng S."/>
            <person name="Wong E.D."/>
            <person name="Lloyd P."/>
            <person name="Skrzypek M.S."/>
            <person name="Miyasato S.R."/>
            <person name="Simison M."/>
            <person name="Cherry J.M."/>
        </authorList>
    </citation>
    <scope>GENOME REANNOTATION</scope>
    <source>
        <strain>ATCC 204508 / S288c</strain>
    </source>
</reference>
<reference key="3">
    <citation type="journal article" date="2007" name="Genome Res.">
        <title>Approaching a complete repository of sequence-verified protein-encoding clones for Saccharomyces cerevisiae.</title>
        <authorList>
            <person name="Hu Y."/>
            <person name="Rolfs A."/>
            <person name="Bhullar B."/>
            <person name="Murthy T.V.S."/>
            <person name="Zhu C."/>
            <person name="Berger M.F."/>
            <person name="Camargo A.A."/>
            <person name="Kelley F."/>
            <person name="McCarron S."/>
            <person name="Jepson D."/>
            <person name="Richardson A."/>
            <person name="Raphael J."/>
            <person name="Moreira D."/>
            <person name="Taycher E."/>
            <person name="Zuo D."/>
            <person name="Mohr S."/>
            <person name="Kane M.F."/>
            <person name="Williamson J."/>
            <person name="Simpson A.J.G."/>
            <person name="Bulyk M.L."/>
            <person name="Harlow E."/>
            <person name="Marsischky G."/>
            <person name="Kolodner R.D."/>
            <person name="LaBaer J."/>
        </authorList>
    </citation>
    <scope>NUCLEOTIDE SEQUENCE [GENOMIC DNA]</scope>
    <source>
        <strain>ATCC 204508 / S288c</strain>
    </source>
</reference>
<reference key="4">
    <citation type="journal article" date="1997" name="Yeast">
        <title>Phylogenetic classification of the mitochondrial carrier family of Saccharomyces cerevisiae.</title>
        <authorList>
            <person name="el Moualij B."/>
            <person name="Duyckaerts C."/>
            <person name="Lamotte-Brasseur J."/>
            <person name="Sluse F.E."/>
        </authorList>
    </citation>
    <scope>CLASSIFICATION</scope>
</reference>
<reference key="5">
    <citation type="journal article" date="2000" name="Biochim. Biophys. Acta">
        <title>The yeast mitochondrial transport proteins: new sequences and consensus residues, lack of direct relation between consensus residues and transmembrane helices, expression patterns of the transport protein genes, and protein-protein interactions with other proteins.</title>
        <authorList>
            <person name="Belenkiy R."/>
            <person name="Haefele A."/>
            <person name="Eisen M.B."/>
            <person name="Wohlrab H."/>
        </authorList>
    </citation>
    <scope>SUBCELLULAR LOCATION</scope>
</reference>
<reference key="6">
    <citation type="journal article" date="2003" name="Nature">
        <title>Global analysis of protein localization in budding yeast.</title>
        <authorList>
            <person name="Huh W.-K."/>
            <person name="Falvo J.V."/>
            <person name="Gerke L.C."/>
            <person name="Carroll A.S."/>
            <person name="Howson R.W."/>
            <person name="Weissman J.S."/>
            <person name="O'Shea E.K."/>
        </authorList>
    </citation>
    <scope>SUBCELLULAR LOCATION [LARGE SCALE ANALYSIS]</scope>
</reference>
<reference key="7">
    <citation type="journal article" date="2003" name="Nature">
        <title>Global analysis of protein expression in yeast.</title>
        <authorList>
            <person name="Ghaemmaghami S."/>
            <person name="Huh W.-K."/>
            <person name="Bower K."/>
            <person name="Howson R.W."/>
            <person name="Belle A."/>
            <person name="Dephoure N."/>
            <person name="O'Shea E.K."/>
            <person name="Weissman J.S."/>
        </authorList>
    </citation>
    <scope>LEVEL OF PROTEIN EXPRESSION [LARGE SCALE ANALYSIS]</scope>
</reference>
<reference key="8">
    <citation type="journal article" date="2006" name="J. Proteome Res.">
        <title>Toward the complete yeast mitochondrial proteome: multidimensional separation techniques for mitochondrial proteomics.</title>
        <authorList>
            <person name="Reinders J."/>
            <person name="Zahedi R.P."/>
            <person name="Pfanner N."/>
            <person name="Meisinger C."/>
            <person name="Sickmann A."/>
        </authorList>
    </citation>
    <scope>SUBCELLULAR LOCATION [LARGE SCALE ANALYSIS]</scope>
    <scope>IDENTIFICATION BY MASS SPECTROMETRY</scope>
</reference>
<reference key="9">
    <citation type="journal article" date="2009" name="Nat. Genet.">
        <title>Mutations in mitochondrial carrier family gene SLC25A38 cause nonsyndromic autosomal recessive congenital sideroblastic anemia.</title>
        <authorList>
            <person name="Guernsey D.L."/>
            <person name="Jiang H."/>
            <person name="Campagna D.R."/>
            <person name="Evans S.C."/>
            <person name="Ferguson M."/>
            <person name="Kellogg M.D."/>
            <person name="Lachance M."/>
            <person name="Matsuoka M."/>
            <person name="Nightingale M."/>
            <person name="Rideout A."/>
            <person name="Saint-Amant L."/>
            <person name="Schmidt P.J."/>
            <person name="Orr A."/>
            <person name="Bottomley S.S."/>
            <person name="Fleming M.D."/>
            <person name="Ludman M."/>
            <person name="Dyack S."/>
            <person name="Fernandez C.V."/>
            <person name="Samuels M.E."/>
        </authorList>
    </citation>
    <scope>FUNCTION</scope>
    <scope>DISRUPTION PHENOTYPE</scope>
</reference>
<reference key="10">
    <citation type="journal article" date="2015" name="Cell">
        <title>Mitochondrial ClpX activates a key enzyme for heme biosynthesis and erythropoiesis.</title>
        <authorList>
            <person name="Kardon J.R."/>
            <person name="Yien Y.Y."/>
            <person name="Huston N.C."/>
            <person name="Branco D.S."/>
            <person name="Hildick-Smith G.J."/>
            <person name="Rhee K.Y."/>
            <person name="Paw B.H."/>
            <person name="Baker T.A."/>
        </authorList>
    </citation>
    <scope>DISRUPTION PHENOTYPE</scope>
</reference>
<reference key="11">
    <citation type="journal article" date="2016" name="J. Biol. Chem.">
        <title>Characterization of human and yeast mitochondrial glycine carriers with implications for heme biosynthesis and anemia.</title>
        <authorList>
            <person name="Lunetti P."/>
            <person name="Damiano F."/>
            <person name="De Benedetto G."/>
            <person name="Siculella L."/>
            <person name="Pennetta A."/>
            <person name="Muto L."/>
            <person name="Paradies E."/>
            <person name="Marobbio C.M."/>
            <person name="Dolce V."/>
            <person name="Capobianco L."/>
        </authorList>
    </citation>
    <scope>FUNCTION</scope>
    <scope>BIOPHYSICOCHEMICAL PROPERTIES</scope>
    <scope>SUBCELLULAR LOCATION</scope>
</reference>
<reference key="12">
    <citation type="journal article" date="2016" name="PLoS Genet.">
        <title>Glycine and folate ameliorate models of congenital sideroblastic anemia.</title>
        <authorList>
            <person name="Fernandez-Murray J.P."/>
            <person name="Prykhozhij S.V."/>
            <person name="Dufay J.N."/>
            <person name="Steele S.L."/>
            <person name="Gaston D."/>
            <person name="Nasrallah G.K."/>
            <person name="Coombs A.J."/>
            <person name="Liwski R.S."/>
            <person name="Fernandez C.V."/>
            <person name="Berman J.N."/>
            <person name="McMaster C.R."/>
        </authorList>
    </citation>
    <scope>FUNCTION</scope>
</reference>
<evidence type="ECO:0000250" key="1">
    <source>
        <dbReference type="UniProtKB" id="Q96DW6"/>
    </source>
</evidence>
<evidence type="ECO:0000255" key="2">
    <source>
        <dbReference type="HAMAP-Rule" id="MF_03064"/>
    </source>
</evidence>
<evidence type="ECO:0000269" key="3">
    <source>
    </source>
</evidence>
<evidence type="ECO:0000269" key="4">
    <source>
    </source>
</evidence>
<evidence type="ECO:0000269" key="5">
    <source>
    </source>
</evidence>
<evidence type="ECO:0000269" key="6">
    <source>
    </source>
</evidence>
<evidence type="ECO:0000269" key="7">
    <source>
    </source>
</evidence>
<evidence type="ECO:0000269" key="8">
    <source>
    </source>
</evidence>
<evidence type="ECO:0000269" key="9">
    <source>
    </source>
</evidence>
<evidence type="ECO:0000303" key="10">
    <source>
    </source>
</evidence>
<evidence type="ECO:0000303" key="11">
    <source>
    </source>
</evidence>
<evidence type="ECO:0000305" key="12">
    <source>
    </source>
</evidence>
<evidence type="ECO:0000305" key="13">
    <source>
    </source>
</evidence>
<evidence type="ECO:0000312" key="14">
    <source>
        <dbReference type="SGD" id="S000002277"/>
    </source>
</evidence>
<proteinExistence type="evidence at protein level"/>
<name>S2538_YEAST</name>
<sequence length="307" mass="34204">MTEQATKPRNSSHLIGGFFGGLTSAVALQPLDLLKTRIQQDKKATLWKNLKEIDSPLQLWRGTLPSALRTSIGSALYLSCLNLMRSSLAKRRNAVPSLTNDSNIVYNKSSSLPRLTMYENLLTGAFARGLVGYITMPITVIKVRYESTLYNYSSLKEAITHIYTKEGLFGFFRGFGATCLRDAPYAGLYVLLYEKSKQLLPMVLPSRFIHYNPEGGFTTYTSTTVNTTSAVLSASLATTVTAPFDTIKTRMQLEPSKFTNSFNTFTSIVKNENVLKLFSGLSMRLARKAFSAGIAWGIYEELVKRFM</sequence>
<organism>
    <name type="scientific">Saccharomyces cerevisiae (strain ATCC 204508 / S288c)</name>
    <name type="common">Baker's yeast</name>
    <dbReference type="NCBI Taxonomy" id="559292"/>
    <lineage>
        <taxon>Eukaryota</taxon>
        <taxon>Fungi</taxon>
        <taxon>Dikarya</taxon>
        <taxon>Ascomycota</taxon>
        <taxon>Saccharomycotina</taxon>
        <taxon>Saccharomycetes</taxon>
        <taxon>Saccharomycetales</taxon>
        <taxon>Saccharomycetaceae</taxon>
        <taxon>Saccharomyces</taxon>
    </lineage>
</organism>
<dbReference type="EMBL" id="Z74167">
    <property type="protein sequence ID" value="CAA98686.1"/>
    <property type="molecule type" value="Genomic_DNA"/>
</dbReference>
<dbReference type="EMBL" id="AY692648">
    <property type="protein sequence ID" value="AAT92667.1"/>
    <property type="molecule type" value="Genomic_DNA"/>
</dbReference>
<dbReference type="EMBL" id="BK006938">
    <property type="protein sequence ID" value="DAA11741.1"/>
    <property type="molecule type" value="Genomic_DNA"/>
</dbReference>
<dbReference type="PIR" id="S67662">
    <property type="entry name" value="S67662"/>
</dbReference>
<dbReference type="RefSeq" id="NP_010164.1">
    <property type="nucleotide sequence ID" value="NM_001180178.1"/>
</dbReference>
<dbReference type="SMR" id="Q07534"/>
<dbReference type="BioGRID" id="31944">
    <property type="interactions" value="160"/>
</dbReference>
<dbReference type="FunCoup" id="Q07534">
    <property type="interactions" value="123"/>
</dbReference>
<dbReference type="IntAct" id="Q07534">
    <property type="interactions" value="5"/>
</dbReference>
<dbReference type="MINT" id="Q07534"/>
<dbReference type="STRING" id="4932.YDL119C"/>
<dbReference type="PaxDb" id="4932-YDL119C"/>
<dbReference type="PeptideAtlas" id="Q07534"/>
<dbReference type="EnsemblFungi" id="YDL119C_mRNA">
    <property type="protein sequence ID" value="YDL119C"/>
    <property type="gene ID" value="YDL119C"/>
</dbReference>
<dbReference type="GeneID" id="851439"/>
<dbReference type="KEGG" id="sce:YDL119C"/>
<dbReference type="AGR" id="SGD:S000002277"/>
<dbReference type="SGD" id="S000002277">
    <property type="gene designation" value="HEM25"/>
</dbReference>
<dbReference type="VEuPathDB" id="FungiDB:YDL119C"/>
<dbReference type="eggNOG" id="KOG0766">
    <property type="taxonomic scope" value="Eukaryota"/>
</dbReference>
<dbReference type="GeneTree" id="ENSGT00550000075117"/>
<dbReference type="HOGENOM" id="CLU_015166_0_3_1"/>
<dbReference type="InParanoid" id="Q07534"/>
<dbReference type="OMA" id="WGIYEEL"/>
<dbReference type="OrthoDB" id="1924968at2759"/>
<dbReference type="BioCyc" id="YEAST:G3O-29518-MONOMER"/>
<dbReference type="BioGRID-ORCS" id="851439">
    <property type="hits" value="0 hits in 10 CRISPR screens"/>
</dbReference>
<dbReference type="PRO" id="PR:Q07534"/>
<dbReference type="Proteomes" id="UP000002311">
    <property type="component" value="Chromosome IV"/>
</dbReference>
<dbReference type="RNAct" id="Q07534">
    <property type="molecule type" value="protein"/>
</dbReference>
<dbReference type="GO" id="GO:0005743">
    <property type="term" value="C:mitochondrial inner membrane"/>
    <property type="evidence" value="ECO:0007669"/>
    <property type="project" value="UniProtKB-SubCell"/>
</dbReference>
<dbReference type="GO" id="GO:0005739">
    <property type="term" value="C:mitochondrion"/>
    <property type="evidence" value="ECO:0000314"/>
    <property type="project" value="SGD"/>
</dbReference>
<dbReference type="GO" id="GO:0015187">
    <property type="term" value="F:glycine transmembrane transporter activity"/>
    <property type="evidence" value="ECO:0000314"/>
    <property type="project" value="SGD"/>
</dbReference>
<dbReference type="GO" id="GO:1904983">
    <property type="term" value="P:glycine import into mitochondrion"/>
    <property type="evidence" value="ECO:0000315"/>
    <property type="project" value="SGD"/>
</dbReference>
<dbReference type="GO" id="GO:0006783">
    <property type="term" value="P:heme biosynthetic process"/>
    <property type="evidence" value="ECO:0000315"/>
    <property type="project" value="UniProtKB"/>
</dbReference>
<dbReference type="FunFam" id="1.50.40.10:FF:000103">
    <property type="entry name" value="Mitochondrial glycine transporter"/>
    <property type="match status" value="1"/>
</dbReference>
<dbReference type="Gene3D" id="1.50.40.10">
    <property type="entry name" value="Mitochondrial carrier domain"/>
    <property type="match status" value="1"/>
</dbReference>
<dbReference type="HAMAP" id="MF_03064">
    <property type="entry name" value="SLC25A38"/>
    <property type="match status" value="1"/>
</dbReference>
<dbReference type="InterPro" id="IPR030847">
    <property type="entry name" value="Hem25/SLC25A38"/>
</dbReference>
<dbReference type="InterPro" id="IPR002067">
    <property type="entry name" value="Mit_carrier"/>
</dbReference>
<dbReference type="InterPro" id="IPR018108">
    <property type="entry name" value="Mitochondrial_sb/sol_carrier"/>
</dbReference>
<dbReference type="InterPro" id="IPR023395">
    <property type="entry name" value="Mt_carrier_dom_sf"/>
</dbReference>
<dbReference type="PANTHER" id="PTHR46181">
    <property type="entry name" value="MITOCHONDRIAL GLYCINE TRANSPORTER"/>
    <property type="match status" value="1"/>
</dbReference>
<dbReference type="PANTHER" id="PTHR46181:SF3">
    <property type="entry name" value="MITOCHONDRIAL GLYCINE TRANSPORTER"/>
    <property type="match status" value="1"/>
</dbReference>
<dbReference type="Pfam" id="PF00153">
    <property type="entry name" value="Mito_carr"/>
    <property type="match status" value="3"/>
</dbReference>
<dbReference type="PRINTS" id="PR00926">
    <property type="entry name" value="MITOCARRIER"/>
</dbReference>
<dbReference type="SUPFAM" id="SSF103506">
    <property type="entry name" value="Mitochondrial carrier"/>
    <property type="match status" value="1"/>
</dbReference>
<dbReference type="PROSITE" id="PS50920">
    <property type="entry name" value="SOLCAR"/>
    <property type="match status" value="3"/>
</dbReference>
<gene>
    <name evidence="10" type="primary">HEM25</name>
    <name evidence="14" type="ordered locus">YDL119C</name>
</gene>
<keyword id="KW-0472">Membrane</keyword>
<keyword id="KW-0496">Mitochondrion</keyword>
<keyword id="KW-0999">Mitochondrion inner membrane</keyword>
<keyword id="KW-1185">Reference proteome</keyword>
<keyword id="KW-0677">Repeat</keyword>
<keyword id="KW-0812">Transmembrane</keyword>
<keyword id="KW-1133">Transmembrane helix</keyword>
<keyword id="KW-0813">Transport</keyword>
<protein>
    <recommendedName>
        <fullName evidence="2 11">Mitochondrial glycine transporter</fullName>
    </recommendedName>
    <alternativeName>
        <fullName evidence="10">Heme biosynthesis protein of SLC25 family</fullName>
    </alternativeName>
    <alternativeName>
        <fullName evidence="2">Solute carrier family 25 member 38 homolog</fullName>
    </alternativeName>
</protein>
<feature type="chain" id="PRO_0000240707" description="Mitochondrial glycine transporter">
    <location>
        <begin position="1"/>
        <end position="307"/>
    </location>
</feature>
<feature type="transmembrane region" description="Helical; Name=1" evidence="2">
    <location>
        <begin position="14"/>
        <end position="39"/>
    </location>
</feature>
<feature type="transmembrane region" description="Helical; Name=2" evidence="2">
    <location>
        <begin position="62"/>
        <end position="88"/>
    </location>
</feature>
<feature type="transmembrane region" description="Helical; Name=3" evidence="2">
    <location>
        <begin position="121"/>
        <end position="146"/>
    </location>
</feature>
<feature type="transmembrane region" description="Helical; Name=4" evidence="2">
    <location>
        <begin position="174"/>
        <end position="197"/>
    </location>
</feature>
<feature type="transmembrane region" description="Helical; Name=5" evidence="2">
    <location>
        <begin position="225"/>
        <end position="251"/>
    </location>
</feature>
<feature type="transmembrane region" description="Helical; Name=6" evidence="2">
    <location>
        <begin position="280"/>
        <end position="298"/>
    </location>
</feature>
<feature type="repeat" description="Solcar 1" evidence="2">
    <location>
        <begin position="8"/>
        <end position="87"/>
    </location>
</feature>
<feature type="repeat" description="Solcar 2" evidence="2">
    <location>
        <begin position="115"/>
        <end position="199"/>
    </location>
</feature>
<feature type="repeat" description="Solcar 3" evidence="2">
    <location>
        <begin position="221"/>
        <end position="305"/>
    </location>
</feature>
<accession>Q07534</accession>
<accession>D6VRN1</accession>